<dbReference type="EC" id="1.1.1.-"/>
<dbReference type="EMBL" id="AL606589">
    <property type="protein sequence ID" value="CAE01603.2"/>
    <property type="molecule type" value="Genomic_DNA"/>
</dbReference>
<dbReference type="EMBL" id="AL606625">
    <property type="protein sequence ID" value="CAE03308.2"/>
    <property type="molecule type" value="Genomic_DNA"/>
</dbReference>
<dbReference type="EMBL" id="AP008210">
    <property type="protein sequence ID" value="BAF14408.1"/>
    <property type="molecule type" value="Genomic_DNA"/>
</dbReference>
<dbReference type="EMBL" id="AP014960">
    <property type="protein sequence ID" value="BAS88648.1"/>
    <property type="molecule type" value="Genomic_DNA"/>
</dbReference>
<dbReference type="EMBL" id="CM000141">
    <property type="protein sequence ID" value="EAZ30267.1"/>
    <property type="molecule type" value="Genomic_DNA"/>
</dbReference>
<dbReference type="EMBL" id="AK061686">
    <property type="protein sequence ID" value="BAG88057.1"/>
    <property type="molecule type" value="mRNA"/>
</dbReference>
<dbReference type="EMBL" id="AK099774">
    <property type="protein sequence ID" value="BAG94289.1"/>
    <property type="molecule type" value="mRNA"/>
</dbReference>
<dbReference type="RefSeq" id="XP_015635955.1">
    <property type="nucleotide sequence ID" value="XM_015780469.1"/>
</dbReference>
<dbReference type="SMR" id="Q7XT99"/>
<dbReference type="FunCoup" id="Q7XT99">
    <property type="interactions" value="54"/>
</dbReference>
<dbReference type="STRING" id="39947.Q7XT99"/>
<dbReference type="PaxDb" id="39947-Q7XT99"/>
<dbReference type="EnsemblPlants" id="Os04t0338000-01">
    <property type="protein sequence ID" value="Os04t0338000-01"/>
    <property type="gene ID" value="Os04g0338000"/>
</dbReference>
<dbReference type="Gramene" id="Os04t0338000-01">
    <property type="protein sequence ID" value="Os04t0338000-01"/>
    <property type="gene ID" value="Os04g0338000"/>
</dbReference>
<dbReference type="KEGG" id="dosa:Os04g0338000"/>
<dbReference type="eggNOG" id="KOG1575">
    <property type="taxonomic scope" value="Eukaryota"/>
</dbReference>
<dbReference type="HOGENOM" id="CLU_023205_2_1_1"/>
<dbReference type="InParanoid" id="Q7XT99"/>
<dbReference type="OMA" id="MSDFYTT"/>
<dbReference type="OrthoDB" id="37537at2759"/>
<dbReference type="Proteomes" id="UP000000763">
    <property type="component" value="Chromosome 4"/>
</dbReference>
<dbReference type="Proteomes" id="UP000007752">
    <property type="component" value="Chromosome 4"/>
</dbReference>
<dbReference type="Proteomes" id="UP000059680">
    <property type="component" value="Chromosome 4"/>
</dbReference>
<dbReference type="GO" id="GO:0005737">
    <property type="term" value="C:cytoplasm"/>
    <property type="evidence" value="ECO:0000318"/>
    <property type="project" value="GO_Central"/>
</dbReference>
<dbReference type="GO" id="GO:0004033">
    <property type="term" value="F:aldo-keto reductase (NADPH) activity"/>
    <property type="evidence" value="ECO:0000318"/>
    <property type="project" value="GO_Central"/>
</dbReference>
<dbReference type="CDD" id="cd19145">
    <property type="entry name" value="AKR_AKR13D1"/>
    <property type="match status" value="1"/>
</dbReference>
<dbReference type="FunFam" id="3.20.20.100:FF:000048">
    <property type="entry name" value="Probable aldo-keto reductase 4"/>
    <property type="match status" value="1"/>
</dbReference>
<dbReference type="Gene3D" id="3.20.20.100">
    <property type="entry name" value="NADP-dependent oxidoreductase domain"/>
    <property type="match status" value="1"/>
</dbReference>
<dbReference type="InterPro" id="IPR050791">
    <property type="entry name" value="Aldo-Keto_reductase"/>
</dbReference>
<dbReference type="InterPro" id="IPR023210">
    <property type="entry name" value="NADP_OxRdtase_dom"/>
</dbReference>
<dbReference type="InterPro" id="IPR036812">
    <property type="entry name" value="NADP_OxRdtase_dom_sf"/>
</dbReference>
<dbReference type="PANTHER" id="PTHR43625">
    <property type="entry name" value="AFLATOXIN B1 ALDEHYDE REDUCTASE"/>
    <property type="match status" value="1"/>
</dbReference>
<dbReference type="PANTHER" id="PTHR43625:SF40">
    <property type="entry name" value="ALDO-KETO REDUCTASE YAKC [NADP(+)]"/>
    <property type="match status" value="1"/>
</dbReference>
<dbReference type="Pfam" id="PF00248">
    <property type="entry name" value="Aldo_ket_red"/>
    <property type="match status" value="1"/>
</dbReference>
<dbReference type="SUPFAM" id="SSF51430">
    <property type="entry name" value="NAD(P)-linked oxidoreductase"/>
    <property type="match status" value="1"/>
</dbReference>
<gene>
    <name type="ordered locus">Os04g0338000</name>
    <name type="ordered locus">LOC_Os04g26910</name>
    <name type="ORF">OsJ_14315</name>
    <name type="ORF">OSJNBa0008A08.11</name>
    <name type="ORF">OSJNBa0032I19.2</name>
</gene>
<feature type="chain" id="PRO_0000415748" description="Probable aldo-keto reductase 2">
    <location>
        <begin position="1"/>
        <end position="351"/>
    </location>
</feature>
<feature type="region of interest" description="Disordered" evidence="2">
    <location>
        <begin position="317"/>
        <end position="351"/>
    </location>
</feature>
<feature type="compositionally biased region" description="Polar residues" evidence="2">
    <location>
        <begin position="332"/>
        <end position="351"/>
    </location>
</feature>
<feature type="active site" description="Proton donor" evidence="1">
    <location>
        <position position="67"/>
    </location>
</feature>
<feature type="binding site" evidence="1">
    <location>
        <position position="134"/>
    </location>
    <ligand>
        <name>substrate</name>
    </ligand>
</feature>
<feature type="binding site" evidence="1">
    <location>
        <begin position="213"/>
        <end position="223"/>
    </location>
    <ligand>
        <name>NADP(+)</name>
        <dbReference type="ChEBI" id="CHEBI:58349"/>
    </ligand>
</feature>
<organism>
    <name type="scientific">Oryza sativa subsp. japonica</name>
    <name type="common">Rice</name>
    <dbReference type="NCBI Taxonomy" id="39947"/>
    <lineage>
        <taxon>Eukaryota</taxon>
        <taxon>Viridiplantae</taxon>
        <taxon>Streptophyta</taxon>
        <taxon>Embryophyta</taxon>
        <taxon>Tracheophyta</taxon>
        <taxon>Spermatophyta</taxon>
        <taxon>Magnoliopsida</taxon>
        <taxon>Liliopsida</taxon>
        <taxon>Poales</taxon>
        <taxon>Poaceae</taxon>
        <taxon>BOP clade</taxon>
        <taxon>Oryzoideae</taxon>
        <taxon>Oryzeae</taxon>
        <taxon>Oryzinae</taxon>
        <taxon>Oryza</taxon>
        <taxon>Oryza sativa</taxon>
    </lineage>
</organism>
<name>AKR2_ORYSJ</name>
<comment type="similarity">
    <text evidence="3">Belongs to the aldo/keto reductase family.</text>
</comment>
<accession>Q7XT99</accession>
<accession>A0A0P0W8V2</accession>
<keyword id="KW-0521">NADP</keyword>
<keyword id="KW-0560">Oxidoreductase</keyword>
<keyword id="KW-1185">Reference proteome</keyword>
<evidence type="ECO:0000250" key="1"/>
<evidence type="ECO:0000256" key="2">
    <source>
        <dbReference type="SAM" id="MobiDB-lite"/>
    </source>
</evidence>
<evidence type="ECO:0000305" key="3"/>
<reference key="1">
    <citation type="journal article" date="2002" name="Nature">
        <title>Sequence and analysis of rice chromosome 4.</title>
        <authorList>
            <person name="Feng Q."/>
            <person name="Zhang Y."/>
            <person name="Hao P."/>
            <person name="Wang S."/>
            <person name="Fu G."/>
            <person name="Huang Y."/>
            <person name="Li Y."/>
            <person name="Zhu J."/>
            <person name="Liu Y."/>
            <person name="Hu X."/>
            <person name="Jia P."/>
            <person name="Zhang Y."/>
            <person name="Zhao Q."/>
            <person name="Ying K."/>
            <person name="Yu S."/>
            <person name="Tang Y."/>
            <person name="Weng Q."/>
            <person name="Zhang L."/>
            <person name="Lu Y."/>
            <person name="Mu J."/>
            <person name="Lu Y."/>
            <person name="Zhang L.S."/>
            <person name="Yu Z."/>
            <person name="Fan D."/>
            <person name="Liu X."/>
            <person name="Lu T."/>
            <person name="Li C."/>
            <person name="Wu Y."/>
            <person name="Sun T."/>
            <person name="Lei H."/>
            <person name="Li T."/>
            <person name="Hu H."/>
            <person name="Guan J."/>
            <person name="Wu M."/>
            <person name="Zhang R."/>
            <person name="Zhou B."/>
            <person name="Chen Z."/>
            <person name="Chen L."/>
            <person name="Jin Z."/>
            <person name="Wang R."/>
            <person name="Yin H."/>
            <person name="Cai Z."/>
            <person name="Ren S."/>
            <person name="Lv G."/>
            <person name="Gu W."/>
            <person name="Zhu G."/>
            <person name="Tu Y."/>
            <person name="Jia J."/>
            <person name="Zhang Y."/>
            <person name="Chen J."/>
            <person name="Kang H."/>
            <person name="Chen X."/>
            <person name="Shao C."/>
            <person name="Sun Y."/>
            <person name="Hu Q."/>
            <person name="Zhang X."/>
            <person name="Zhang W."/>
            <person name="Wang L."/>
            <person name="Ding C."/>
            <person name="Sheng H."/>
            <person name="Gu J."/>
            <person name="Chen S."/>
            <person name="Ni L."/>
            <person name="Zhu F."/>
            <person name="Chen W."/>
            <person name="Lan L."/>
            <person name="Lai Y."/>
            <person name="Cheng Z."/>
            <person name="Gu M."/>
            <person name="Jiang J."/>
            <person name="Li J."/>
            <person name="Hong G."/>
            <person name="Xue Y."/>
            <person name="Han B."/>
        </authorList>
    </citation>
    <scope>NUCLEOTIDE SEQUENCE [LARGE SCALE GENOMIC DNA]</scope>
    <source>
        <strain>cv. Nipponbare</strain>
    </source>
</reference>
<reference key="2">
    <citation type="journal article" date="2005" name="Nature">
        <title>The map-based sequence of the rice genome.</title>
        <authorList>
            <consortium name="International rice genome sequencing project (IRGSP)"/>
        </authorList>
    </citation>
    <scope>NUCLEOTIDE SEQUENCE [LARGE SCALE GENOMIC DNA]</scope>
    <source>
        <strain>cv. Nipponbare</strain>
    </source>
</reference>
<reference key="3">
    <citation type="journal article" date="2008" name="Nucleic Acids Res.">
        <title>The rice annotation project database (RAP-DB): 2008 update.</title>
        <authorList>
            <consortium name="The rice annotation project (RAP)"/>
        </authorList>
    </citation>
    <scope>GENOME REANNOTATION</scope>
    <source>
        <strain>cv. Nipponbare</strain>
    </source>
</reference>
<reference key="4">
    <citation type="journal article" date="2013" name="Rice">
        <title>Improvement of the Oryza sativa Nipponbare reference genome using next generation sequence and optical map data.</title>
        <authorList>
            <person name="Kawahara Y."/>
            <person name="de la Bastide M."/>
            <person name="Hamilton J.P."/>
            <person name="Kanamori H."/>
            <person name="McCombie W.R."/>
            <person name="Ouyang S."/>
            <person name="Schwartz D.C."/>
            <person name="Tanaka T."/>
            <person name="Wu J."/>
            <person name="Zhou S."/>
            <person name="Childs K.L."/>
            <person name="Davidson R.M."/>
            <person name="Lin H."/>
            <person name="Quesada-Ocampo L."/>
            <person name="Vaillancourt B."/>
            <person name="Sakai H."/>
            <person name="Lee S.S."/>
            <person name="Kim J."/>
            <person name="Numa H."/>
            <person name="Itoh T."/>
            <person name="Buell C.R."/>
            <person name="Matsumoto T."/>
        </authorList>
    </citation>
    <scope>GENOME REANNOTATION</scope>
    <source>
        <strain>cv. Nipponbare</strain>
    </source>
</reference>
<reference key="5">
    <citation type="journal article" date="2005" name="PLoS Biol.">
        <title>The genomes of Oryza sativa: a history of duplications.</title>
        <authorList>
            <person name="Yu J."/>
            <person name="Wang J."/>
            <person name="Lin W."/>
            <person name="Li S."/>
            <person name="Li H."/>
            <person name="Zhou J."/>
            <person name="Ni P."/>
            <person name="Dong W."/>
            <person name="Hu S."/>
            <person name="Zeng C."/>
            <person name="Zhang J."/>
            <person name="Zhang Y."/>
            <person name="Li R."/>
            <person name="Xu Z."/>
            <person name="Li S."/>
            <person name="Li X."/>
            <person name="Zheng H."/>
            <person name="Cong L."/>
            <person name="Lin L."/>
            <person name="Yin J."/>
            <person name="Geng J."/>
            <person name="Li G."/>
            <person name="Shi J."/>
            <person name="Liu J."/>
            <person name="Lv H."/>
            <person name="Li J."/>
            <person name="Wang J."/>
            <person name="Deng Y."/>
            <person name="Ran L."/>
            <person name="Shi X."/>
            <person name="Wang X."/>
            <person name="Wu Q."/>
            <person name="Li C."/>
            <person name="Ren X."/>
            <person name="Wang J."/>
            <person name="Wang X."/>
            <person name="Li D."/>
            <person name="Liu D."/>
            <person name="Zhang X."/>
            <person name="Ji Z."/>
            <person name="Zhao W."/>
            <person name="Sun Y."/>
            <person name="Zhang Z."/>
            <person name="Bao J."/>
            <person name="Han Y."/>
            <person name="Dong L."/>
            <person name="Ji J."/>
            <person name="Chen P."/>
            <person name="Wu S."/>
            <person name="Liu J."/>
            <person name="Xiao Y."/>
            <person name="Bu D."/>
            <person name="Tan J."/>
            <person name="Yang L."/>
            <person name="Ye C."/>
            <person name="Zhang J."/>
            <person name="Xu J."/>
            <person name="Zhou Y."/>
            <person name="Yu Y."/>
            <person name="Zhang B."/>
            <person name="Zhuang S."/>
            <person name="Wei H."/>
            <person name="Liu B."/>
            <person name="Lei M."/>
            <person name="Yu H."/>
            <person name="Li Y."/>
            <person name="Xu H."/>
            <person name="Wei S."/>
            <person name="He X."/>
            <person name="Fang L."/>
            <person name="Zhang Z."/>
            <person name="Zhang Y."/>
            <person name="Huang X."/>
            <person name="Su Z."/>
            <person name="Tong W."/>
            <person name="Li J."/>
            <person name="Tong Z."/>
            <person name="Li S."/>
            <person name="Ye J."/>
            <person name="Wang L."/>
            <person name="Fang L."/>
            <person name="Lei T."/>
            <person name="Chen C.-S."/>
            <person name="Chen H.-C."/>
            <person name="Xu Z."/>
            <person name="Li H."/>
            <person name="Huang H."/>
            <person name="Zhang F."/>
            <person name="Xu H."/>
            <person name="Li N."/>
            <person name="Zhao C."/>
            <person name="Li S."/>
            <person name="Dong L."/>
            <person name="Huang Y."/>
            <person name="Li L."/>
            <person name="Xi Y."/>
            <person name="Qi Q."/>
            <person name="Li W."/>
            <person name="Zhang B."/>
            <person name="Hu W."/>
            <person name="Zhang Y."/>
            <person name="Tian X."/>
            <person name="Jiao Y."/>
            <person name="Liang X."/>
            <person name="Jin J."/>
            <person name="Gao L."/>
            <person name="Zheng W."/>
            <person name="Hao B."/>
            <person name="Liu S.-M."/>
            <person name="Wang W."/>
            <person name="Yuan L."/>
            <person name="Cao M."/>
            <person name="McDermott J."/>
            <person name="Samudrala R."/>
            <person name="Wang J."/>
            <person name="Wong G.K.-S."/>
            <person name="Yang H."/>
        </authorList>
    </citation>
    <scope>NUCLEOTIDE SEQUENCE [LARGE SCALE GENOMIC DNA]</scope>
    <source>
        <strain>cv. Nipponbare</strain>
    </source>
</reference>
<reference key="6">
    <citation type="journal article" date="2003" name="Science">
        <title>Collection, mapping, and annotation of over 28,000 cDNA clones from japonica rice.</title>
        <authorList>
            <consortium name="The rice full-length cDNA consortium"/>
        </authorList>
    </citation>
    <scope>NUCLEOTIDE SEQUENCE [LARGE SCALE MRNA]</scope>
    <source>
        <strain>cv. Nipponbare</strain>
    </source>
</reference>
<protein>
    <recommendedName>
        <fullName>Probable aldo-keto reductase 2</fullName>
        <ecNumber>1.1.1.-</ecNumber>
    </recommendedName>
</protein>
<proteinExistence type="evidence at transcript level"/>
<sequence length="351" mass="38234">MAAAAPATAAVRRMKLGSQGLEVSAQGLGCMGMSAFYGPPKPEPDMVALIHHAVAAGVTLLDTSDIYGPHTNELLLGKALQGGVRDKVELATKFGIAFEDGKRDVRGDPAYVRAACEGSLRRLGVDSIDLYYQHRVDKKVPIEVTIGELKKLVEEGKIKYIGLSEASASTIRRAHAVHPITAVQLEWSLWSRDVEEDIIPTCRELGIGIVAYSPLGRGFFSAGAKLVESLSDQDFRKHIPRFQQENLEKNAEIFERVNAMAARKGCTPSQLALAWVHHQGSDVCPIPGTTKIENLNQNIGALSVKLTPEEMAELESYASTDDVRGDRYPQAMANTTWQNSETPPLSSWKAQ</sequence>